<feature type="chain" id="PRO_1000116181" description="Adenine phosphoribosyltransferase">
    <location>
        <begin position="1"/>
        <end position="182"/>
    </location>
</feature>
<evidence type="ECO:0000255" key="1">
    <source>
        <dbReference type="HAMAP-Rule" id="MF_00004"/>
    </source>
</evidence>
<name>APT_PSEA8</name>
<proteinExistence type="inferred from homology"/>
<protein>
    <recommendedName>
        <fullName evidence="1">Adenine phosphoribosyltransferase</fullName>
        <shortName evidence="1">APRT</shortName>
        <ecNumber evidence="1">2.4.2.7</ecNumber>
    </recommendedName>
</protein>
<keyword id="KW-0963">Cytoplasm</keyword>
<keyword id="KW-0328">Glycosyltransferase</keyword>
<keyword id="KW-0660">Purine salvage</keyword>
<keyword id="KW-0808">Transferase</keyword>
<accession>B7UVH9</accession>
<reference key="1">
    <citation type="journal article" date="2009" name="Genome Res.">
        <title>Newly introduced genomic prophage islands are critical determinants of in vivo competitiveness in the Liverpool epidemic strain of Pseudomonas aeruginosa.</title>
        <authorList>
            <person name="Winstanley C."/>
            <person name="Langille M.G.I."/>
            <person name="Fothergill J.L."/>
            <person name="Kukavica-Ibrulj I."/>
            <person name="Paradis-Bleau C."/>
            <person name="Sanschagrin F."/>
            <person name="Thomson N.R."/>
            <person name="Winsor G.L."/>
            <person name="Quail M.A."/>
            <person name="Lennard N."/>
            <person name="Bignell A."/>
            <person name="Clarke L."/>
            <person name="Seeger K."/>
            <person name="Saunders D."/>
            <person name="Harris D."/>
            <person name="Parkhill J."/>
            <person name="Hancock R.E.W."/>
            <person name="Brinkman F.S.L."/>
            <person name="Levesque R.C."/>
        </authorList>
    </citation>
    <scope>NUCLEOTIDE SEQUENCE [LARGE SCALE GENOMIC DNA]</scope>
    <source>
        <strain>LESB58</strain>
    </source>
</reference>
<organism>
    <name type="scientific">Pseudomonas aeruginosa (strain LESB58)</name>
    <dbReference type="NCBI Taxonomy" id="557722"/>
    <lineage>
        <taxon>Bacteria</taxon>
        <taxon>Pseudomonadati</taxon>
        <taxon>Pseudomonadota</taxon>
        <taxon>Gammaproteobacteria</taxon>
        <taxon>Pseudomonadales</taxon>
        <taxon>Pseudomonadaceae</taxon>
        <taxon>Pseudomonas</taxon>
    </lineage>
</organism>
<gene>
    <name evidence="1" type="primary">apt</name>
    <name type="ordered locus">PLES_37851</name>
</gene>
<comment type="function">
    <text evidence="1">Catalyzes a salvage reaction resulting in the formation of AMP, that is energically less costly than de novo synthesis.</text>
</comment>
<comment type="catalytic activity">
    <reaction evidence="1">
        <text>AMP + diphosphate = 5-phospho-alpha-D-ribose 1-diphosphate + adenine</text>
        <dbReference type="Rhea" id="RHEA:16609"/>
        <dbReference type="ChEBI" id="CHEBI:16708"/>
        <dbReference type="ChEBI" id="CHEBI:33019"/>
        <dbReference type="ChEBI" id="CHEBI:58017"/>
        <dbReference type="ChEBI" id="CHEBI:456215"/>
        <dbReference type="EC" id="2.4.2.7"/>
    </reaction>
</comment>
<comment type="pathway">
    <text evidence="1">Purine metabolism; AMP biosynthesis via salvage pathway; AMP from adenine: step 1/1.</text>
</comment>
<comment type="subunit">
    <text evidence="1">Homodimer.</text>
</comment>
<comment type="subcellular location">
    <subcellularLocation>
        <location evidence="1">Cytoplasm</location>
    </subcellularLocation>
</comment>
<comment type="similarity">
    <text evidence="1">Belongs to the purine/pyrimidine phosphoribosyltransferase family.</text>
</comment>
<sequence>MIFDEFTLKSQIRAVPDFPKPGVVFRDITPLFQSPRALRMTVDSFVQRYIEADFSHIGAMDARGFLIGSAVAYALNKPLVLFRKQGKLPADVLAEGYQTEYGEAFLEVHADSLCEGDSVLIFDDLIATGGTLLAAASLVRRLGARVFEAAAIIDLPELGGSTRLQDAGISTFSLTAFALDER</sequence>
<dbReference type="EC" id="2.4.2.7" evidence="1"/>
<dbReference type="EMBL" id="FM209186">
    <property type="protein sequence ID" value="CAW28512.1"/>
    <property type="molecule type" value="Genomic_DNA"/>
</dbReference>
<dbReference type="RefSeq" id="WP_003087259.1">
    <property type="nucleotide sequence ID" value="NC_011770.1"/>
</dbReference>
<dbReference type="SMR" id="B7UVH9"/>
<dbReference type="KEGG" id="pag:PLES_37851"/>
<dbReference type="HOGENOM" id="CLU_063339_3_0_6"/>
<dbReference type="UniPathway" id="UPA00588">
    <property type="reaction ID" value="UER00646"/>
</dbReference>
<dbReference type="GO" id="GO:0005829">
    <property type="term" value="C:cytosol"/>
    <property type="evidence" value="ECO:0007669"/>
    <property type="project" value="TreeGrafter"/>
</dbReference>
<dbReference type="GO" id="GO:0003999">
    <property type="term" value="F:adenine phosphoribosyltransferase activity"/>
    <property type="evidence" value="ECO:0007669"/>
    <property type="project" value="UniProtKB-UniRule"/>
</dbReference>
<dbReference type="GO" id="GO:0006168">
    <property type="term" value="P:adenine salvage"/>
    <property type="evidence" value="ECO:0007669"/>
    <property type="project" value="InterPro"/>
</dbReference>
<dbReference type="GO" id="GO:0044209">
    <property type="term" value="P:AMP salvage"/>
    <property type="evidence" value="ECO:0007669"/>
    <property type="project" value="UniProtKB-UniRule"/>
</dbReference>
<dbReference type="GO" id="GO:0006166">
    <property type="term" value="P:purine ribonucleoside salvage"/>
    <property type="evidence" value="ECO:0007669"/>
    <property type="project" value="UniProtKB-KW"/>
</dbReference>
<dbReference type="CDD" id="cd06223">
    <property type="entry name" value="PRTases_typeI"/>
    <property type="match status" value="1"/>
</dbReference>
<dbReference type="FunFam" id="3.40.50.2020:FF:000021">
    <property type="entry name" value="Adenine phosphoribosyltransferase"/>
    <property type="match status" value="1"/>
</dbReference>
<dbReference type="Gene3D" id="3.40.50.2020">
    <property type="match status" value="1"/>
</dbReference>
<dbReference type="HAMAP" id="MF_00004">
    <property type="entry name" value="Aden_phosphoribosyltr"/>
    <property type="match status" value="1"/>
</dbReference>
<dbReference type="InterPro" id="IPR005764">
    <property type="entry name" value="Ade_phspho_trans"/>
</dbReference>
<dbReference type="InterPro" id="IPR050120">
    <property type="entry name" value="Adenine_PRTase"/>
</dbReference>
<dbReference type="InterPro" id="IPR000836">
    <property type="entry name" value="PRibTrfase_dom"/>
</dbReference>
<dbReference type="InterPro" id="IPR029057">
    <property type="entry name" value="PRTase-like"/>
</dbReference>
<dbReference type="NCBIfam" id="TIGR01090">
    <property type="entry name" value="apt"/>
    <property type="match status" value="1"/>
</dbReference>
<dbReference type="NCBIfam" id="NF002634">
    <property type="entry name" value="PRK02304.1-3"/>
    <property type="match status" value="1"/>
</dbReference>
<dbReference type="NCBIfam" id="NF002636">
    <property type="entry name" value="PRK02304.1-5"/>
    <property type="match status" value="1"/>
</dbReference>
<dbReference type="PANTHER" id="PTHR11776">
    <property type="entry name" value="ADENINE PHOSPHORIBOSYLTRANSFERASE"/>
    <property type="match status" value="1"/>
</dbReference>
<dbReference type="PANTHER" id="PTHR11776:SF7">
    <property type="entry name" value="PHOSPHORIBOSYLTRANSFERASE DOMAIN-CONTAINING PROTEIN"/>
    <property type="match status" value="1"/>
</dbReference>
<dbReference type="Pfam" id="PF00156">
    <property type="entry name" value="Pribosyltran"/>
    <property type="match status" value="1"/>
</dbReference>
<dbReference type="SUPFAM" id="SSF53271">
    <property type="entry name" value="PRTase-like"/>
    <property type="match status" value="1"/>
</dbReference>
<dbReference type="PROSITE" id="PS00103">
    <property type="entry name" value="PUR_PYR_PR_TRANSFER"/>
    <property type="match status" value="1"/>
</dbReference>